<evidence type="ECO:0000250" key="1">
    <source>
        <dbReference type="UniProtKB" id="Q9Y3B6"/>
    </source>
</evidence>
<evidence type="ECO:0000255" key="2">
    <source>
        <dbReference type="PROSITE-ProRule" id="PRU01182"/>
    </source>
</evidence>
<evidence type="ECO:0000305" key="3"/>
<protein>
    <recommendedName>
        <fullName>ER membrane protein complex subunit 9</fullName>
    </recommendedName>
    <alternativeName>
        <fullName>Protein FAM158A</fullName>
    </alternativeName>
</protein>
<accession>Q5U1W7</accession>
<proteinExistence type="evidence at transcript level"/>
<reference key="1">
    <citation type="journal article" date="2004" name="Genome Res.">
        <title>The status, quality, and expansion of the NIH full-length cDNA project: the Mammalian Gene Collection (MGC).</title>
        <authorList>
            <consortium name="The MGC Project Team"/>
        </authorList>
    </citation>
    <scope>NUCLEOTIDE SEQUENCE [LARGE SCALE MRNA]</scope>
    <source>
        <tissue>Ovary</tissue>
    </source>
</reference>
<comment type="function">
    <text evidence="1">Part of the endoplasmic reticulum membrane protein complex (EMC) that enables the energy-independent insertion into endoplasmic reticulum membranes of newly synthesized membrane proteins. Preferentially accommodates proteins with transmembrane domains that are weakly hydrophobic or contain destabilizing features such as charged and aromatic residues. Involved in the cotranslational insertion of multi-pass membrane proteins in which stop-transfer membrane-anchor sequences become ER membrane spanning helices. It is also required for the post-translational insertion of tail-anchored/TA proteins in endoplasmic reticulum membranes. By mediating the proper cotranslational insertion of N-terminal transmembrane domains in an N-exo topology, with translocated N-terminus in the lumen of the ER, controls the topology of multi-pass membrane proteins like the G protein-coupled receptors. By regulating the insertion of various proteins in membranes, it is indirectly involved in many cellular processes.</text>
</comment>
<comment type="subunit">
    <text evidence="1">Component of the ER membrane protein complex (EMC). EMC8 and EMC9 are mutually exclusive subunits of the EMC complex.</text>
</comment>
<comment type="subcellular location">
    <subcellularLocation>
        <location evidence="1">Endoplasmic reticulum membrane</location>
        <topology evidence="1">Peripheral membrane protein</topology>
        <orientation evidence="1">Cytoplasmic side</orientation>
    </subcellularLocation>
</comment>
<comment type="similarity">
    <text evidence="3">Belongs to the EMC8/EMC9 family.</text>
</comment>
<feature type="chain" id="PRO_0000328441" description="ER membrane protein complex subunit 9">
    <location>
        <begin position="1"/>
        <end position="206"/>
    </location>
</feature>
<feature type="domain" description="MPN" evidence="2">
    <location>
        <begin position="4"/>
        <end position="139"/>
    </location>
</feature>
<gene>
    <name type="primary">Emc9</name>
    <name type="synonym">Fam158a</name>
</gene>
<keyword id="KW-0256">Endoplasmic reticulum</keyword>
<keyword id="KW-0472">Membrane</keyword>
<keyword id="KW-1185">Reference proteome</keyword>
<dbReference type="EMBL" id="BC086432">
    <property type="protein sequence ID" value="AAH86432.1"/>
    <property type="molecule type" value="mRNA"/>
</dbReference>
<dbReference type="RefSeq" id="NP_001008297.1">
    <property type="nucleotide sequence ID" value="NM_001008296.1"/>
</dbReference>
<dbReference type="SMR" id="Q5U1W7"/>
<dbReference type="FunCoup" id="Q5U1W7">
    <property type="interactions" value="1365"/>
</dbReference>
<dbReference type="STRING" id="10116.ENSRNOP00000026001"/>
<dbReference type="PhosphoSitePlus" id="Q5U1W7"/>
<dbReference type="PaxDb" id="10116-ENSRNOP00000026001"/>
<dbReference type="Ensembl" id="ENSRNOT00000026001.6">
    <property type="protein sequence ID" value="ENSRNOP00000026001.3"/>
    <property type="gene ID" value="ENSRNOG00000019162.6"/>
</dbReference>
<dbReference type="GeneID" id="290224"/>
<dbReference type="KEGG" id="rno:290224"/>
<dbReference type="UCSC" id="RGD:1308113">
    <property type="organism name" value="rat"/>
</dbReference>
<dbReference type="AGR" id="RGD:1308113"/>
<dbReference type="CTD" id="51016"/>
<dbReference type="RGD" id="1308113">
    <property type="gene designation" value="Emc9"/>
</dbReference>
<dbReference type="eggNOG" id="KOG3289">
    <property type="taxonomic scope" value="Eukaryota"/>
</dbReference>
<dbReference type="GeneTree" id="ENSGT00390000006738"/>
<dbReference type="HOGENOM" id="CLU_087337_0_1_1"/>
<dbReference type="InParanoid" id="Q5U1W7"/>
<dbReference type="OMA" id="CLSDCVP"/>
<dbReference type="OrthoDB" id="194468at2759"/>
<dbReference type="PhylomeDB" id="Q5U1W7"/>
<dbReference type="TreeFam" id="TF313860"/>
<dbReference type="PRO" id="PR:Q5U1W7"/>
<dbReference type="Proteomes" id="UP000002494">
    <property type="component" value="Chromosome 15"/>
</dbReference>
<dbReference type="Bgee" id="ENSRNOG00000019162">
    <property type="expression patterns" value="Expressed in heart and 19 other cell types or tissues"/>
</dbReference>
<dbReference type="GO" id="GO:0005737">
    <property type="term" value="C:cytoplasm"/>
    <property type="evidence" value="ECO:0000250"/>
    <property type="project" value="UniProtKB"/>
</dbReference>
<dbReference type="GO" id="GO:0072546">
    <property type="term" value="C:EMC complex"/>
    <property type="evidence" value="ECO:0000250"/>
    <property type="project" value="UniProtKB"/>
</dbReference>
<dbReference type="GO" id="GO:0032977">
    <property type="term" value="F:membrane insertase activity"/>
    <property type="evidence" value="ECO:0007669"/>
    <property type="project" value="Ensembl"/>
</dbReference>
<dbReference type="GO" id="GO:0045050">
    <property type="term" value="P:protein insertion into ER membrane by stop-transfer membrane-anchor sequence"/>
    <property type="evidence" value="ECO:0000250"/>
    <property type="project" value="UniProtKB"/>
</dbReference>
<dbReference type="GO" id="GO:0071816">
    <property type="term" value="P:tail-anchored membrane protein insertion into ER membrane"/>
    <property type="evidence" value="ECO:0000250"/>
    <property type="project" value="UniProtKB"/>
</dbReference>
<dbReference type="CDD" id="cd08060">
    <property type="entry name" value="MPN_UPF0172"/>
    <property type="match status" value="1"/>
</dbReference>
<dbReference type="InterPro" id="IPR005366">
    <property type="entry name" value="EMC8/9"/>
</dbReference>
<dbReference type="InterPro" id="IPR037518">
    <property type="entry name" value="MPN"/>
</dbReference>
<dbReference type="PANTHER" id="PTHR12941">
    <property type="entry name" value="ER MEMBRANE PROTEIN COMPLEX"/>
    <property type="match status" value="1"/>
</dbReference>
<dbReference type="PANTHER" id="PTHR12941:SF12">
    <property type="entry name" value="ER MEMBRANE PROTEIN COMPLEX SUBUNIT 9"/>
    <property type="match status" value="1"/>
</dbReference>
<dbReference type="Pfam" id="PF03665">
    <property type="entry name" value="UPF0172"/>
    <property type="match status" value="1"/>
</dbReference>
<dbReference type="PROSITE" id="PS50249">
    <property type="entry name" value="MPN"/>
    <property type="match status" value="1"/>
</dbReference>
<organism>
    <name type="scientific">Rattus norvegicus</name>
    <name type="common">Rat</name>
    <dbReference type="NCBI Taxonomy" id="10116"/>
    <lineage>
        <taxon>Eukaryota</taxon>
        <taxon>Metazoa</taxon>
        <taxon>Chordata</taxon>
        <taxon>Craniata</taxon>
        <taxon>Vertebrata</taxon>
        <taxon>Euteleostomi</taxon>
        <taxon>Mammalia</taxon>
        <taxon>Eutheria</taxon>
        <taxon>Euarchontoglires</taxon>
        <taxon>Glires</taxon>
        <taxon>Rodentia</taxon>
        <taxon>Myomorpha</taxon>
        <taxon>Muroidea</taxon>
        <taxon>Muridae</taxon>
        <taxon>Murinae</taxon>
        <taxon>Rattus</taxon>
    </lineage>
</organism>
<name>EMC9_RAT</name>
<sequence>MGEVEISARAYGKMCLHASRYPHAAVNGLLLAPATRSGECLCLTDCVPLFHSHLALSVMLEVALNQVDVWATQAGLVVAGYYHANAVLDDQSPGPLALKIAGRIAEFFPNAVLIMLDNKKLVTWPRVPPVIVLENQGLQWVPKDKNLVMWRDWEESRQMVGALLEGRAHQHLVDFDCHLDDIRQDWTNQRLNTQITQWSGSTDGHA</sequence>